<sequence length="161" mass="18662">MSLYQSIVFIARNVVNSITRILHDHPTNSSLITQTYFITPNHSGKNISFHLFHDFKYCSADTRHYSQLIIFPVKENSRPTQVSRPLGGRPHESVFLPKFTRTQNSYCLTRLDRMGFPPPRKASTIMHFFQDDRTVMCSPKDGIPVSSFHIMICFLERRKGN</sequence>
<accession>Q99341</accession>
<accession>P89900</accession>
<protein>
    <recommendedName>
        <fullName>Putative uncharacterized protein FYV1</fullName>
    </recommendedName>
</protein>
<reference key="1">
    <citation type="journal article" date="1996" name="Yeast">
        <title>Sequencing and analysis of a 35.4 kb region on the right arm of chromosome IV from Saccharomyces cerevisiae reveal 23 open reading frames.</title>
        <authorList>
            <person name="Eide L.G."/>
            <person name="Sander C."/>
            <person name="Prydz H."/>
        </authorList>
    </citation>
    <scope>NUCLEOTIDE SEQUENCE [GENOMIC DNA]</scope>
</reference>
<reference key="2">
    <citation type="journal article" date="1997" name="Nature">
        <title>The nucleotide sequence of Saccharomyces cerevisiae chromosome IV.</title>
        <authorList>
            <person name="Jacq C."/>
            <person name="Alt-Moerbe J."/>
            <person name="Andre B."/>
            <person name="Arnold W."/>
            <person name="Bahr A."/>
            <person name="Ballesta J.P.G."/>
            <person name="Bargues M."/>
            <person name="Baron L."/>
            <person name="Becker A."/>
            <person name="Biteau N."/>
            <person name="Bloecker H."/>
            <person name="Blugeon C."/>
            <person name="Boskovic J."/>
            <person name="Brandt P."/>
            <person name="Brueckner M."/>
            <person name="Buitrago M.J."/>
            <person name="Coster F."/>
            <person name="Delaveau T."/>
            <person name="del Rey F."/>
            <person name="Dujon B."/>
            <person name="Eide L.G."/>
            <person name="Garcia-Cantalejo J.M."/>
            <person name="Goffeau A."/>
            <person name="Gomez-Peris A."/>
            <person name="Granotier C."/>
            <person name="Hanemann V."/>
            <person name="Hankeln T."/>
            <person name="Hoheisel J.D."/>
            <person name="Jaeger W."/>
            <person name="Jimenez A."/>
            <person name="Jonniaux J.-L."/>
            <person name="Kraemer C."/>
            <person name="Kuester H."/>
            <person name="Laamanen P."/>
            <person name="Legros Y."/>
            <person name="Louis E.J."/>
            <person name="Moeller-Rieker S."/>
            <person name="Monnet A."/>
            <person name="Moro M."/>
            <person name="Mueller-Auer S."/>
            <person name="Nussbaumer B."/>
            <person name="Paricio N."/>
            <person name="Paulin L."/>
            <person name="Perea J."/>
            <person name="Perez-Alonso M."/>
            <person name="Perez-Ortin J.E."/>
            <person name="Pohl T.M."/>
            <person name="Prydz H."/>
            <person name="Purnelle B."/>
            <person name="Rasmussen S.W."/>
            <person name="Remacha M.A."/>
            <person name="Revuelta J.L."/>
            <person name="Rieger M."/>
            <person name="Salom D."/>
            <person name="Saluz H.P."/>
            <person name="Saiz J.E."/>
            <person name="Saren A.-M."/>
            <person name="Schaefer M."/>
            <person name="Scharfe M."/>
            <person name="Schmidt E.R."/>
            <person name="Schneider C."/>
            <person name="Scholler P."/>
            <person name="Schwarz S."/>
            <person name="Soler-Mira A."/>
            <person name="Urrestarazu L.A."/>
            <person name="Verhasselt P."/>
            <person name="Vissers S."/>
            <person name="Voet M."/>
            <person name="Volckaert G."/>
            <person name="Wagner G."/>
            <person name="Wambutt R."/>
            <person name="Wedler E."/>
            <person name="Wedler H."/>
            <person name="Woelfl S."/>
            <person name="Harris D.E."/>
            <person name="Bowman S."/>
            <person name="Brown D."/>
            <person name="Churcher C.M."/>
            <person name="Connor R."/>
            <person name="Dedman K."/>
            <person name="Gentles S."/>
            <person name="Hamlin N."/>
            <person name="Hunt S."/>
            <person name="Jones L."/>
            <person name="McDonald S."/>
            <person name="Murphy L.D."/>
            <person name="Niblett D."/>
            <person name="Odell C."/>
            <person name="Oliver K."/>
            <person name="Rajandream M.A."/>
            <person name="Richards C."/>
            <person name="Shore L."/>
            <person name="Walsh S.V."/>
            <person name="Barrell B.G."/>
            <person name="Dietrich F.S."/>
            <person name="Mulligan J.T."/>
            <person name="Allen E."/>
            <person name="Araujo R."/>
            <person name="Aviles E."/>
            <person name="Berno A."/>
            <person name="Carpenter J."/>
            <person name="Chen E."/>
            <person name="Cherry J.M."/>
            <person name="Chung E."/>
            <person name="Duncan M."/>
            <person name="Hunicke-Smith S."/>
            <person name="Hyman R.W."/>
            <person name="Komp C."/>
            <person name="Lashkari D."/>
            <person name="Lew H."/>
            <person name="Lin D."/>
            <person name="Mosedale D."/>
            <person name="Nakahara K."/>
            <person name="Namath A."/>
            <person name="Oefner P."/>
            <person name="Oh C."/>
            <person name="Petel F.X."/>
            <person name="Roberts D."/>
            <person name="Schramm S."/>
            <person name="Schroeder M."/>
            <person name="Shogren T."/>
            <person name="Shroff N."/>
            <person name="Winant A."/>
            <person name="Yelton M.A."/>
            <person name="Botstein D."/>
            <person name="Davis R.W."/>
            <person name="Johnston M."/>
            <person name="Andrews S."/>
            <person name="Brinkman R."/>
            <person name="Cooper J."/>
            <person name="Ding H."/>
            <person name="Du Z."/>
            <person name="Favello A."/>
            <person name="Fulton L."/>
            <person name="Gattung S."/>
            <person name="Greco T."/>
            <person name="Hallsworth K."/>
            <person name="Hawkins J."/>
            <person name="Hillier L.W."/>
            <person name="Jier M."/>
            <person name="Johnson D."/>
            <person name="Johnston L."/>
            <person name="Kirsten J."/>
            <person name="Kucaba T."/>
            <person name="Langston Y."/>
            <person name="Latreille P."/>
            <person name="Le T."/>
            <person name="Mardis E."/>
            <person name="Menezes S."/>
            <person name="Miller N."/>
            <person name="Nhan M."/>
            <person name="Pauley A."/>
            <person name="Peluso D."/>
            <person name="Rifkin L."/>
            <person name="Riles L."/>
            <person name="Taich A."/>
            <person name="Trevaskis E."/>
            <person name="Vignati D."/>
            <person name="Wilcox L."/>
            <person name="Wohldman P."/>
            <person name="Vaudin M."/>
            <person name="Wilson R."/>
            <person name="Waterston R."/>
            <person name="Albermann K."/>
            <person name="Hani J."/>
            <person name="Heumann K."/>
            <person name="Kleine K."/>
            <person name="Mewes H.-W."/>
            <person name="Zollner A."/>
            <person name="Zaccaria P."/>
        </authorList>
    </citation>
    <scope>NUCLEOTIDE SEQUENCE [LARGE SCALE GENOMIC DNA]</scope>
    <source>
        <strain>ATCC 204508 / S288c</strain>
    </source>
</reference>
<reference key="3">
    <citation type="journal article" date="2014" name="G3 (Bethesda)">
        <title>The reference genome sequence of Saccharomyces cerevisiae: Then and now.</title>
        <authorList>
            <person name="Engel S.R."/>
            <person name="Dietrich F.S."/>
            <person name="Fisk D.G."/>
            <person name="Binkley G."/>
            <person name="Balakrishnan R."/>
            <person name="Costanzo M.C."/>
            <person name="Dwight S.S."/>
            <person name="Hitz B.C."/>
            <person name="Karra K."/>
            <person name="Nash R.S."/>
            <person name="Weng S."/>
            <person name="Wong E.D."/>
            <person name="Lloyd P."/>
            <person name="Skrzypek M.S."/>
            <person name="Miyasato S.R."/>
            <person name="Simison M."/>
            <person name="Cherry J.M."/>
        </authorList>
    </citation>
    <scope>GENOME REANNOTATION</scope>
    <source>
        <strain>ATCC 204508 / S288c</strain>
    </source>
</reference>
<reference key="4">
    <citation type="journal article" date="2003" name="Genetics">
        <title>A Saccharomyces cerevisiae genome-wide mutant screen for altered sensitivity to K1 killer toxin.</title>
        <authorList>
            <person name="Page N."/>
            <person name="Gerard-Vincent M."/>
            <person name="Menard P."/>
            <person name="Beaulieu M."/>
            <person name="Azuma M."/>
            <person name="Dijkgraaf G.J.P."/>
            <person name="Li H."/>
            <person name="Marcoux J."/>
            <person name="Nguyen T."/>
            <person name="Dowse T."/>
            <person name="Sdicu A.-M."/>
            <person name="Bussey H."/>
        </authorList>
    </citation>
    <scope>DISRUPTION PHENOTYPE</scope>
</reference>
<gene>
    <name type="primary">FYV1</name>
    <name type="ordered locus">YDR024W</name>
    <name type="ORF">PZA161</name>
</gene>
<name>FYV1_YEAST</name>
<dbReference type="EMBL" id="X95966">
    <property type="protein sequence ID" value="CAA65217.1"/>
    <property type="molecule type" value="Genomic_DNA"/>
</dbReference>
<dbReference type="EMBL" id="Z47814">
    <property type="protein sequence ID" value="CAA87803.1"/>
    <property type="molecule type" value="Genomic_DNA"/>
</dbReference>
<dbReference type="EMBL" id="Z74320">
    <property type="protein sequence ID" value="CAA98845.1"/>
    <property type="molecule type" value="Genomic_DNA"/>
</dbReference>
<dbReference type="EMBL" id="Z74321">
    <property type="protein sequence ID" value="CAA98847.1"/>
    <property type="molecule type" value="Genomic_DNA"/>
</dbReference>
<dbReference type="PIR" id="S50931">
    <property type="entry name" value="S50931"/>
</dbReference>
<dbReference type="IntAct" id="Q99341">
    <property type="interactions" value="1"/>
</dbReference>
<dbReference type="MINT" id="Q99341"/>
<dbReference type="STRING" id="4932.YDR024W"/>
<dbReference type="PaxDb" id="4932-YDR024W"/>
<dbReference type="EnsemblFungi" id="YDR024W_mRNA">
    <property type="protein sequence ID" value="YDR024W"/>
    <property type="gene ID" value="YDR024W"/>
</dbReference>
<dbReference type="AGR" id="SGD:S000002431"/>
<dbReference type="SGD" id="S000002431">
    <property type="gene designation" value="FYV1"/>
</dbReference>
<dbReference type="HOGENOM" id="CLU_1653522_0_0_1"/>
<dbReference type="GO" id="GO:0005737">
    <property type="term" value="C:cytoplasm"/>
    <property type="evidence" value="ECO:0007005"/>
    <property type="project" value="SGD"/>
</dbReference>
<dbReference type="GO" id="GO:0005634">
    <property type="term" value="C:nucleus"/>
    <property type="evidence" value="ECO:0007005"/>
    <property type="project" value="SGD"/>
</dbReference>
<proteinExistence type="uncertain"/>
<organism>
    <name type="scientific">Saccharomyces cerevisiae (strain ATCC 204508 / S288c)</name>
    <name type="common">Baker's yeast</name>
    <dbReference type="NCBI Taxonomy" id="559292"/>
    <lineage>
        <taxon>Eukaryota</taxon>
        <taxon>Fungi</taxon>
        <taxon>Dikarya</taxon>
        <taxon>Ascomycota</taxon>
        <taxon>Saccharomycotina</taxon>
        <taxon>Saccharomycetes</taxon>
        <taxon>Saccharomycetales</taxon>
        <taxon>Saccharomycetaceae</taxon>
        <taxon>Saccharomyces</taxon>
    </lineage>
</organism>
<evidence type="ECO:0000269" key="1">
    <source>
    </source>
</evidence>
<evidence type="ECO:0000305" key="2">
    <source>
    </source>
</evidence>
<feature type="chain" id="PRO_0000299774" description="Putative uncharacterized protein FYV1">
    <location>
        <begin position="1"/>
        <end position="161"/>
    </location>
</feature>
<comment type="disruption phenotype">
    <text evidence="1">Deletion decreases survival upon exposure to K1 killer toxin.</text>
</comment>
<comment type="caution">
    <text evidence="2">Product of a dubious gene prediction unlikely to encode a functional protein. Because of that it is not part of the S.cerevisiae S288c complete/reference proteome set.</text>
</comment>